<proteinExistence type="inferred from homology"/>
<gene>
    <name evidence="1" type="primary">rplT</name>
    <name type="ordered locus">SCH_1355</name>
</gene>
<protein>
    <recommendedName>
        <fullName evidence="1">Large ribosomal subunit protein bL20</fullName>
    </recommendedName>
    <alternativeName>
        <fullName evidence="2">50S ribosomal protein L20</fullName>
    </alternativeName>
</protein>
<name>RL20_SALCH</name>
<sequence length="118" mass="13497">MARVKRGVIARARHKKILKQAKGYYGARSRVYRVAFQAVIKAGQYAYRDRRQRKRQFRQLWIARINAAARQNGISYSKFINGLKKASVEIDRKILADIAVFDKVAFTALVEKAKAALA</sequence>
<dbReference type="EMBL" id="AE017220">
    <property type="protein sequence ID" value="AAX65261.1"/>
    <property type="molecule type" value="Genomic_DNA"/>
</dbReference>
<dbReference type="RefSeq" id="WP_000124850.1">
    <property type="nucleotide sequence ID" value="NC_006905.1"/>
</dbReference>
<dbReference type="SMR" id="Q57PV0"/>
<dbReference type="GeneID" id="98388757"/>
<dbReference type="KEGG" id="sec:SCH_1355"/>
<dbReference type="HOGENOM" id="CLU_123265_0_1_6"/>
<dbReference type="Proteomes" id="UP000000538">
    <property type="component" value="Chromosome"/>
</dbReference>
<dbReference type="GO" id="GO:1990904">
    <property type="term" value="C:ribonucleoprotein complex"/>
    <property type="evidence" value="ECO:0007669"/>
    <property type="project" value="UniProtKB-KW"/>
</dbReference>
<dbReference type="GO" id="GO:0005840">
    <property type="term" value="C:ribosome"/>
    <property type="evidence" value="ECO:0007669"/>
    <property type="project" value="UniProtKB-KW"/>
</dbReference>
<dbReference type="GO" id="GO:0019843">
    <property type="term" value="F:rRNA binding"/>
    <property type="evidence" value="ECO:0007669"/>
    <property type="project" value="UniProtKB-UniRule"/>
</dbReference>
<dbReference type="GO" id="GO:0003735">
    <property type="term" value="F:structural constituent of ribosome"/>
    <property type="evidence" value="ECO:0007669"/>
    <property type="project" value="InterPro"/>
</dbReference>
<dbReference type="GO" id="GO:0000027">
    <property type="term" value="P:ribosomal large subunit assembly"/>
    <property type="evidence" value="ECO:0007669"/>
    <property type="project" value="UniProtKB-UniRule"/>
</dbReference>
<dbReference type="GO" id="GO:0006412">
    <property type="term" value="P:translation"/>
    <property type="evidence" value="ECO:0007669"/>
    <property type="project" value="InterPro"/>
</dbReference>
<dbReference type="CDD" id="cd07026">
    <property type="entry name" value="Ribosomal_L20"/>
    <property type="match status" value="1"/>
</dbReference>
<dbReference type="FunFam" id="1.10.1900.20:FF:000001">
    <property type="entry name" value="50S ribosomal protein L20"/>
    <property type="match status" value="1"/>
</dbReference>
<dbReference type="Gene3D" id="6.10.160.10">
    <property type="match status" value="1"/>
</dbReference>
<dbReference type="Gene3D" id="1.10.1900.20">
    <property type="entry name" value="Ribosomal protein L20"/>
    <property type="match status" value="1"/>
</dbReference>
<dbReference type="HAMAP" id="MF_00382">
    <property type="entry name" value="Ribosomal_bL20"/>
    <property type="match status" value="1"/>
</dbReference>
<dbReference type="InterPro" id="IPR005813">
    <property type="entry name" value="Ribosomal_bL20"/>
</dbReference>
<dbReference type="InterPro" id="IPR049946">
    <property type="entry name" value="RIBOSOMAL_L20_CS"/>
</dbReference>
<dbReference type="InterPro" id="IPR035566">
    <property type="entry name" value="Ribosomal_protein_bL20_C"/>
</dbReference>
<dbReference type="NCBIfam" id="TIGR01032">
    <property type="entry name" value="rplT_bact"/>
    <property type="match status" value="1"/>
</dbReference>
<dbReference type="PANTHER" id="PTHR10986">
    <property type="entry name" value="39S RIBOSOMAL PROTEIN L20"/>
    <property type="match status" value="1"/>
</dbReference>
<dbReference type="Pfam" id="PF00453">
    <property type="entry name" value="Ribosomal_L20"/>
    <property type="match status" value="1"/>
</dbReference>
<dbReference type="PRINTS" id="PR00062">
    <property type="entry name" value="RIBOSOMALL20"/>
</dbReference>
<dbReference type="SUPFAM" id="SSF74731">
    <property type="entry name" value="Ribosomal protein L20"/>
    <property type="match status" value="1"/>
</dbReference>
<dbReference type="PROSITE" id="PS00937">
    <property type="entry name" value="RIBOSOMAL_L20"/>
    <property type="match status" value="1"/>
</dbReference>
<feature type="chain" id="PRO_0000243732" description="Large ribosomal subunit protein bL20">
    <location>
        <begin position="1"/>
        <end position="118"/>
    </location>
</feature>
<comment type="function">
    <text evidence="1">Binds directly to 23S ribosomal RNA and is necessary for the in vitro assembly process of the 50S ribosomal subunit. It is not involved in the protein synthesizing functions of that subunit.</text>
</comment>
<comment type="similarity">
    <text evidence="1">Belongs to the bacterial ribosomal protein bL20 family.</text>
</comment>
<accession>Q57PV0</accession>
<reference key="1">
    <citation type="journal article" date="2005" name="Nucleic Acids Res.">
        <title>The genome sequence of Salmonella enterica serovar Choleraesuis, a highly invasive and resistant zoonotic pathogen.</title>
        <authorList>
            <person name="Chiu C.-H."/>
            <person name="Tang P."/>
            <person name="Chu C."/>
            <person name="Hu S."/>
            <person name="Bao Q."/>
            <person name="Yu J."/>
            <person name="Chou Y.-Y."/>
            <person name="Wang H.-S."/>
            <person name="Lee Y.-S."/>
        </authorList>
    </citation>
    <scope>NUCLEOTIDE SEQUENCE [LARGE SCALE GENOMIC DNA]</scope>
    <source>
        <strain>SC-B67</strain>
    </source>
</reference>
<organism>
    <name type="scientific">Salmonella choleraesuis (strain SC-B67)</name>
    <dbReference type="NCBI Taxonomy" id="321314"/>
    <lineage>
        <taxon>Bacteria</taxon>
        <taxon>Pseudomonadati</taxon>
        <taxon>Pseudomonadota</taxon>
        <taxon>Gammaproteobacteria</taxon>
        <taxon>Enterobacterales</taxon>
        <taxon>Enterobacteriaceae</taxon>
        <taxon>Salmonella</taxon>
    </lineage>
</organism>
<keyword id="KW-0687">Ribonucleoprotein</keyword>
<keyword id="KW-0689">Ribosomal protein</keyword>
<keyword id="KW-0694">RNA-binding</keyword>
<keyword id="KW-0699">rRNA-binding</keyword>
<evidence type="ECO:0000255" key="1">
    <source>
        <dbReference type="HAMAP-Rule" id="MF_00382"/>
    </source>
</evidence>
<evidence type="ECO:0000305" key="2"/>